<proteinExistence type="inferred from homology"/>
<feature type="chain" id="PRO_0000410454" description="UPF0479 membrane protein YPL283W-B">
    <location>
        <begin position="1"/>
        <end position="160"/>
    </location>
</feature>
<feature type="transmembrane region" description="Helical" evidence="1">
    <location>
        <begin position="39"/>
        <end position="59"/>
    </location>
</feature>
<feature type="transmembrane region" description="Helical" evidence="1">
    <location>
        <begin position="136"/>
        <end position="156"/>
    </location>
</feature>
<comment type="subcellular location">
    <subcellularLocation>
        <location evidence="2">Membrane</location>
        <topology evidence="2">Multi-pass membrane protein</topology>
    </subcellularLocation>
</comment>
<comment type="similarity">
    <text evidence="2">Belongs to the UPF0479 family.</text>
</comment>
<accession>P0CX97</accession>
<accession>D3DMA0</accession>
<accession>Q8TFA4</accession>
<gene>
    <name type="ordered locus">YPL283W-B</name>
</gene>
<reference key="1">
    <citation type="journal article" date="1997" name="Nature">
        <title>The nucleotide sequence of Saccharomyces cerevisiae chromosome XVI.</title>
        <authorList>
            <person name="Bussey H."/>
            <person name="Storms R.K."/>
            <person name="Ahmed A."/>
            <person name="Albermann K."/>
            <person name="Allen E."/>
            <person name="Ansorge W."/>
            <person name="Araujo R."/>
            <person name="Aparicio A."/>
            <person name="Barrell B.G."/>
            <person name="Badcock K."/>
            <person name="Benes V."/>
            <person name="Botstein D."/>
            <person name="Bowman S."/>
            <person name="Brueckner M."/>
            <person name="Carpenter J."/>
            <person name="Cherry J.M."/>
            <person name="Chung E."/>
            <person name="Churcher C.M."/>
            <person name="Coster F."/>
            <person name="Davis K."/>
            <person name="Davis R.W."/>
            <person name="Dietrich F.S."/>
            <person name="Delius H."/>
            <person name="DiPaolo T."/>
            <person name="Dubois E."/>
            <person name="Duesterhoeft A."/>
            <person name="Duncan M."/>
            <person name="Floeth M."/>
            <person name="Fortin N."/>
            <person name="Friesen J.D."/>
            <person name="Fritz C."/>
            <person name="Goffeau A."/>
            <person name="Hall J."/>
            <person name="Hebling U."/>
            <person name="Heumann K."/>
            <person name="Hilbert H."/>
            <person name="Hillier L.W."/>
            <person name="Hunicke-Smith S."/>
            <person name="Hyman R.W."/>
            <person name="Johnston M."/>
            <person name="Kalman S."/>
            <person name="Kleine K."/>
            <person name="Komp C."/>
            <person name="Kurdi O."/>
            <person name="Lashkari D."/>
            <person name="Lew H."/>
            <person name="Lin A."/>
            <person name="Lin D."/>
            <person name="Louis E.J."/>
            <person name="Marathe R."/>
            <person name="Messenguy F."/>
            <person name="Mewes H.-W."/>
            <person name="Mirtipati S."/>
            <person name="Moestl D."/>
            <person name="Mueller-Auer S."/>
            <person name="Namath A."/>
            <person name="Nentwich U."/>
            <person name="Oefner P."/>
            <person name="Pearson D."/>
            <person name="Petel F.X."/>
            <person name="Pohl T.M."/>
            <person name="Purnelle B."/>
            <person name="Rajandream M.A."/>
            <person name="Rechmann S."/>
            <person name="Rieger M."/>
            <person name="Riles L."/>
            <person name="Roberts D."/>
            <person name="Schaefer M."/>
            <person name="Scharfe M."/>
            <person name="Scherens B."/>
            <person name="Schramm S."/>
            <person name="Schroeder M."/>
            <person name="Sdicu A.-M."/>
            <person name="Tettelin H."/>
            <person name="Urrestarazu L.A."/>
            <person name="Ushinsky S."/>
            <person name="Vierendeels F."/>
            <person name="Vissers S."/>
            <person name="Voss H."/>
            <person name="Walsh S.V."/>
            <person name="Wambutt R."/>
            <person name="Wang Y."/>
            <person name="Wedler E."/>
            <person name="Wedler H."/>
            <person name="Winnett E."/>
            <person name="Zhong W.-W."/>
            <person name="Zollner A."/>
            <person name="Vo D.H."/>
            <person name="Hani J."/>
        </authorList>
    </citation>
    <scope>NUCLEOTIDE SEQUENCE [LARGE SCALE GENOMIC DNA]</scope>
    <source>
        <strain>ATCC 204508 / S288c</strain>
    </source>
</reference>
<reference key="2">
    <citation type="journal article" date="2014" name="G3 (Bethesda)">
        <title>The reference genome sequence of Saccharomyces cerevisiae: Then and now.</title>
        <authorList>
            <person name="Engel S.R."/>
            <person name="Dietrich F.S."/>
            <person name="Fisk D.G."/>
            <person name="Binkley G."/>
            <person name="Balakrishnan R."/>
            <person name="Costanzo M.C."/>
            <person name="Dwight S.S."/>
            <person name="Hitz B.C."/>
            <person name="Karra K."/>
            <person name="Nash R.S."/>
            <person name="Weng S."/>
            <person name="Wong E.D."/>
            <person name="Lloyd P."/>
            <person name="Skrzypek M.S."/>
            <person name="Miyasato S.R."/>
            <person name="Simison M."/>
            <person name="Cherry J.M."/>
        </authorList>
    </citation>
    <scope>GENOME REANNOTATION</scope>
    <source>
        <strain>ATCC 204508 / S288c</strain>
    </source>
</reference>
<reference key="3">
    <citation type="journal article" date="2002" name="Nat. Biotechnol.">
        <title>An integrated approach for finding overlooked genes in yeast.</title>
        <authorList>
            <person name="Kumar A."/>
            <person name="Harrison P.M."/>
            <person name="Cheung K.-H."/>
            <person name="Lan N."/>
            <person name="Echols N."/>
            <person name="Bertone P."/>
            <person name="Miller P."/>
            <person name="Gerstein M.B."/>
            <person name="Snyder M."/>
        </authorList>
    </citation>
    <scope>NUCLEOTIDE SEQUENCE [GENOMIC DNA]</scope>
</reference>
<organism>
    <name type="scientific">Saccharomyces cerevisiae (strain ATCC 204508 / S288c)</name>
    <name type="common">Baker's yeast</name>
    <dbReference type="NCBI Taxonomy" id="559292"/>
    <lineage>
        <taxon>Eukaryota</taxon>
        <taxon>Fungi</taxon>
        <taxon>Dikarya</taxon>
        <taxon>Ascomycota</taxon>
        <taxon>Saccharomycotina</taxon>
        <taxon>Saccharomycetes</taxon>
        <taxon>Saccharomycetales</taxon>
        <taxon>Saccharomycetaceae</taxon>
        <taxon>Saccharomyces</taxon>
    </lineage>
</organism>
<dbReference type="EMBL" id="Z73521">
    <property type="status" value="NOT_ANNOTATED_CDS"/>
    <property type="molecule type" value="Genomic_DNA"/>
</dbReference>
<dbReference type="EMBL" id="Z73638">
    <property type="status" value="NOT_ANNOTATED_CDS"/>
    <property type="molecule type" value="Genomic_DNA"/>
</dbReference>
<dbReference type="EMBL" id="AF480020">
    <property type="protein sequence ID" value="AAL79333.1"/>
    <property type="molecule type" value="Genomic_DNA"/>
</dbReference>
<dbReference type="EMBL" id="BK006949">
    <property type="status" value="NOT_ANNOTATED_CDS"/>
    <property type="molecule type" value="Genomic_DNA"/>
</dbReference>
<dbReference type="RefSeq" id="NP_001073292.1">
    <property type="nucleotide sequence ID" value="NM_001184590.1"/>
</dbReference>
<dbReference type="FunCoup" id="P0CX97">
    <property type="interactions" value="3"/>
</dbReference>
<dbReference type="EnsemblFungi" id="YER190C-B_mRNA">
    <property type="protein sequence ID" value="YER190C-B"/>
    <property type="gene ID" value="YER190C-B"/>
</dbReference>
<dbReference type="EnsemblFungi" id="YGR296C-B_mRNA">
    <property type="protein sequence ID" value="YGR296C-B"/>
    <property type="gene ID" value="YGR296C-B"/>
</dbReference>
<dbReference type="EnsemblFungi" id="YPL283W-B_mRNA">
    <property type="protein sequence ID" value="YPL283W-B"/>
    <property type="gene ID" value="YPL283W-B"/>
</dbReference>
<dbReference type="EnsemblFungi" id="YPR204C-A_mRNA">
    <property type="protein sequence ID" value="YPR204C-A"/>
    <property type="gene ID" value="YPR204C-A"/>
</dbReference>
<dbReference type="KEGG" id="sce:YER190C-B"/>
<dbReference type="AGR" id="SGD:S000028724"/>
<dbReference type="SGD" id="S000028724">
    <property type="gene designation" value="YPL283W-B"/>
</dbReference>
<dbReference type="VEuPathDB" id="FungiDB:YER190C-B"/>
<dbReference type="HOGENOM" id="CLU_139933_0_0_1"/>
<dbReference type="InParanoid" id="P0CX97"/>
<dbReference type="PRO" id="PR:P0CX97"/>
<dbReference type="Proteomes" id="UP000002311">
    <property type="component" value="Chromosome XVI"/>
</dbReference>
<dbReference type="RNAct" id="P0CX97">
    <property type="molecule type" value="protein"/>
</dbReference>
<dbReference type="GO" id="GO:0016020">
    <property type="term" value="C:membrane"/>
    <property type="evidence" value="ECO:0007669"/>
    <property type="project" value="UniProtKB-SubCell"/>
</dbReference>
<evidence type="ECO:0000255" key="1"/>
<evidence type="ECO:0000305" key="2"/>
<protein>
    <recommendedName>
        <fullName>UPF0479 membrane protein YPL283W-B</fullName>
    </recommendedName>
</protein>
<sequence>MMPAKLQLDVLRTLQSSARHGTQTLKNSNFLERFHKDRIVFCLPFFPALFFVPVQKVLQHLCLRFTQVAPYFIIQLFDLPSRHAENLAPLLASCRIQYTNCFSSSSNGQVPSIISLYLRVDLSPFYAKIFQISYRVPMIWLDVFQVFFVFLVISQHSLHS</sequence>
<name>YP283_YEAST</name>
<keyword id="KW-0472">Membrane</keyword>
<keyword id="KW-1185">Reference proteome</keyword>
<keyword id="KW-0812">Transmembrane</keyword>
<keyword id="KW-1133">Transmembrane helix</keyword>